<reference key="1">
    <citation type="journal article" date="2006" name="BMC Evol. Biol.">
        <title>Complete plastid genome sequences of Drimys, Liriodendron, and Piper: implications for the phylogenetic relationships of magnoliids.</title>
        <authorList>
            <person name="Cai Z."/>
            <person name="Penaflor C."/>
            <person name="Kuehl J.V."/>
            <person name="Leebens-Mack J."/>
            <person name="Carlson J.E."/>
            <person name="dePamphilis C.W."/>
            <person name="Boore J.L."/>
            <person name="Jansen R.K."/>
        </authorList>
    </citation>
    <scope>NUCLEOTIDE SEQUENCE [LARGE SCALE GENOMIC DNA]</scope>
</reference>
<protein>
    <recommendedName>
        <fullName evidence="1">DNA-directed RNA polymerase subunit alpha</fullName>
        <shortName evidence="1">PEP</shortName>
        <ecNumber evidence="1">2.7.7.6</ecNumber>
    </recommendedName>
    <alternativeName>
        <fullName evidence="1">Plastid-encoded RNA polymerase subunit alpha</fullName>
        <shortName evidence="1">RNA polymerase subunit alpha</shortName>
    </alternativeName>
</protein>
<dbReference type="EC" id="2.7.7.6" evidence="1"/>
<dbReference type="EMBL" id="DQ899947">
    <property type="protein sequence ID" value="ABI32541.1"/>
    <property type="molecule type" value="Genomic_DNA"/>
</dbReference>
<dbReference type="RefSeq" id="YP_740234.1">
    <property type="nucleotide sequence ID" value="NC_008326.1"/>
</dbReference>
<dbReference type="SMR" id="Q0G9I7"/>
<dbReference type="GeneID" id="4266658"/>
<dbReference type="GO" id="GO:0009507">
    <property type="term" value="C:chloroplast"/>
    <property type="evidence" value="ECO:0007669"/>
    <property type="project" value="UniProtKB-SubCell"/>
</dbReference>
<dbReference type="GO" id="GO:0000428">
    <property type="term" value="C:DNA-directed RNA polymerase complex"/>
    <property type="evidence" value="ECO:0007669"/>
    <property type="project" value="UniProtKB-KW"/>
</dbReference>
<dbReference type="GO" id="GO:0005739">
    <property type="term" value="C:mitochondrion"/>
    <property type="evidence" value="ECO:0007669"/>
    <property type="project" value="GOC"/>
</dbReference>
<dbReference type="GO" id="GO:0003677">
    <property type="term" value="F:DNA binding"/>
    <property type="evidence" value="ECO:0007669"/>
    <property type="project" value="UniProtKB-UniRule"/>
</dbReference>
<dbReference type="GO" id="GO:0003899">
    <property type="term" value="F:DNA-directed RNA polymerase activity"/>
    <property type="evidence" value="ECO:0007669"/>
    <property type="project" value="UniProtKB-UniRule"/>
</dbReference>
<dbReference type="GO" id="GO:0046983">
    <property type="term" value="F:protein dimerization activity"/>
    <property type="evidence" value="ECO:0007669"/>
    <property type="project" value="InterPro"/>
</dbReference>
<dbReference type="GO" id="GO:0006351">
    <property type="term" value="P:DNA-templated transcription"/>
    <property type="evidence" value="ECO:0007669"/>
    <property type="project" value="UniProtKB-UniRule"/>
</dbReference>
<dbReference type="CDD" id="cd06928">
    <property type="entry name" value="RNAP_alpha_NTD"/>
    <property type="match status" value="1"/>
</dbReference>
<dbReference type="FunFam" id="1.10.150.20:FF:000021">
    <property type="entry name" value="DNA-directed RNA polymerase subunit alpha"/>
    <property type="match status" value="1"/>
</dbReference>
<dbReference type="FunFam" id="2.170.120.12:FF:000001">
    <property type="entry name" value="DNA-directed RNA polymerase subunit alpha"/>
    <property type="match status" value="1"/>
</dbReference>
<dbReference type="FunFam" id="3.30.1360.10:FF:000039">
    <property type="entry name" value="DNA-directed RNA polymerase subunit alpha"/>
    <property type="match status" value="1"/>
</dbReference>
<dbReference type="Gene3D" id="1.10.150.20">
    <property type="entry name" value="5' to 3' exonuclease, C-terminal subdomain"/>
    <property type="match status" value="1"/>
</dbReference>
<dbReference type="Gene3D" id="2.170.120.12">
    <property type="entry name" value="DNA-directed RNA polymerase, insert domain"/>
    <property type="match status" value="1"/>
</dbReference>
<dbReference type="Gene3D" id="3.30.1360.10">
    <property type="entry name" value="RNA polymerase, RBP11-like subunit"/>
    <property type="match status" value="1"/>
</dbReference>
<dbReference type="HAMAP" id="MF_00059">
    <property type="entry name" value="RNApol_bact_RpoA"/>
    <property type="match status" value="1"/>
</dbReference>
<dbReference type="InterPro" id="IPR011262">
    <property type="entry name" value="DNA-dir_RNA_pol_insert"/>
</dbReference>
<dbReference type="InterPro" id="IPR011263">
    <property type="entry name" value="DNA-dir_RNA_pol_RpoA/D/Rpb3"/>
</dbReference>
<dbReference type="InterPro" id="IPR011773">
    <property type="entry name" value="DNA-dir_RpoA"/>
</dbReference>
<dbReference type="InterPro" id="IPR036603">
    <property type="entry name" value="RBP11-like"/>
</dbReference>
<dbReference type="InterPro" id="IPR011260">
    <property type="entry name" value="RNAP_asu_C"/>
</dbReference>
<dbReference type="InterPro" id="IPR036643">
    <property type="entry name" value="RNApol_insert_sf"/>
</dbReference>
<dbReference type="NCBIfam" id="TIGR02027">
    <property type="entry name" value="rpoA"/>
    <property type="match status" value="1"/>
</dbReference>
<dbReference type="Pfam" id="PF01000">
    <property type="entry name" value="RNA_pol_A_bac"/>
    <property type="match status" value="1"/>
</dbReference>
<dbReference type="Pfam" id="PF03118">
    <property type="entry name" value="RNA_pol_A_CTD"/>
    <property type="match status" value="1"/>
</dbReference>
<dbReference type="Pfam" id="PF01193">
    <property type="entry name" value="RNA_pol_L"/>
    <property type="match status" value="1"/>
</dbReference>
<dbReference type="SMART" id="SM00662">
    <property type="entry name" value="RPOLD"/>
    <property type="match status" value="1"/>
</dbReference>
<dbReference type="SUPFAM" id="SSF47789">
    <property type="entry name" value="C-terminal domain of RNA polymerase alpha subunit"/>
    <property type="match status" value="1"/>
</dbReference>
<dbReference type="SUPFAM" id="SSF56553">
    <property type="entry name" value="Insert subdomain of RNA polymerase alpha subunit"/>
    <property type="match status" value="1"/>
</dbReference>
<dbReference type="SUPFAM" id="SSF55257">
    <property type="entry name" value="RBP11-like subunits of RNA polymerase"/>
    <property type="match status" value="1"/>
</dbReference>
<evidence type="ECO:0000255" key="1">
    <source>
        <dbReference type="HAMAP-Rule" id="MF_00059"/>
    </source>
</evidence>
<proteinExistence type="inferred from homology"/>
<name>RPOA_LIRTU</name>
<accession>Q0G9I7</accession>
<comment type="function">
    <text evidence="1">DNA-dependent RNA polymerase catalyzes the transcription of DNA into RNA using the four ribonucleoside triphosphates as substrates.</text>
</comment>
<comment type="catalytic activity">
    <reaction evidence="1">
        <text>RNA(n) + a ribonucleoside 5'-triphosphate = RNA(n+1) + diphosphate</text>
        <dbReference type="Rhea" id="RHEA:21248"/>
        <dbReference type="Rhea" id="RHEA-COMP:14527"/>
        <dbReference type="Rhea" id="RHEA-COMP:17342"/>
        <dbReference type="ChEBI" id="CHEBI:33019"/>
        <dbReference type="ChEBI" id="CHEBI:61557"/>
        <dbReference type="ChEBI" id="CHEBI:140395"/>
        <dbReference type="EC" id="2.7.7.6"/>
    </reaction>
</comment>
<comment type="subunit">
    <text evidence="1">In plastids the minimal PEP RNA polymerase catalytic core is composed of four subunits: alpha, beta, beta', and beta''. When a (nuclear-encoded) sigma factor is associated with the core the holoenzyme is formed, which can initiate transcription.</text>
</comment>
<comment type="subcellular location">
    <subcellularLocation>
        <location>Plastid</location>
        <location>Chloroplast</location>
    </subcellularLocation>
</comment>
<comment type="domain">
    <text evidence="1">The N-terminal domain is essential for RNAP assembly and basal transcription, whereas the C-terminal domain is involved in interaction with transcriptional regulators and with upstream promoter elements.</text>
</comment>
<comment type="similarity">
    <text evidence="1">Belongs to the RNA polymerase alpha chain family.</text>
</comment>
<geneLocation type="chloroplast"/>
<organism>
    <name type="scientific">Liriodendron tulipifera</name>
    <name type="common">Tuliptree</name>
    <name type="synonym">Tulip poplar</name>
    <dbReference type="NCBI Taxonomy" id="3415"/>
    <lineage>
        <taxon>Eukaryota</taxon>
        <taxon>Viridiplantae</taxon>
        <taxon>Streptophyta</taxon>
        <taxon>Embryophyta</taxon>
        <taxon>Tracheophyta</taxon>
        <taxon>Spermatophyta</taxon>
        <taxon>Magnoliopsida</taxon>
        <taxon>Magnoliidae</taxon>
        <taxon>Magnoliales</taxon>
        <taxon>Magnoliaceae</taxon>
        <taxon>Liriodendron</taxon>
    </lineage>
</organism>
<feature type="chain" id="PRO_0000275690" description="DNA-directed RNA polymerase subunit alpha">
    <location>
        <begin position="1"/>
        <end position="337"/>
    </location>
</feature>
<feature type="region of interest" description="Alpha N-terminal domain (alpha-NTD)" evidence="1">
    <location>
        <begin position="1"/>
        <end position="233"/>
    </location>
</feature>
<feature type="region of interest" description="Alpha C-terminal domain (alpha-CTD)" evidence="1">
    <location>
        <begin position="266"/>
        <end position="337"/>
    </location>
</feature>
<sequence>MVREEVAVSTRTLQWKCVESRTDSKRLYYGRFILAPLMKGQADTIGIAMRRALLGEIEGTCITRVKSEKVPNEYYTIVGIEESVHEILMNLKEIVLRSHLYGTRDASICVRGPRYVTAQDIIPPPSVEIVDTTQHIASLTEPIDLCIELQIERDRGYRMKTPNNYQDGSYPIDAVSMPVRNANHSIHSYGNRNEKQEILFLEIWTNGSLTPKEALHEASRNLIDLFIPFLHAEEQDIVLEDNPNRFTVPLFTFHDRLANIRKNKKGIALKCIFIDQSELPPRTYNCLKRSNIHTLLDLLSNSQEDLMRIEHFRIEDVKQILDILQKHFTIDLPKNKF</sequence>
<keyword id="KW-0150">Chloroplast</keyword>
<keyword id="KW-0240">DNA-directed RNA polymerase</keyword>
<keyword id="KW-0548">Nucleotidyltransferase</keyword>
<keyword id="KW-0934">Plastid</keyword>
<keyword id="KW-0804">Transcription</keyword>
<keyword id="KW-0808">Transferase</keyword>
<gene>
    <name evidence="1" type="primary">rpoA</name>
</gene>